<proteinExistence type="inferred from homology"/>
<name>SYR_GEOUR</name>
<reference key="1">
    <citation type="submission" date="2007-05" db="EMBL/GenBank/DDBJ databases">
        <title>Complete sequence of Geobacter uraniireducens Rf4.</title>
        <authorList>
            <consortium name="US DOE Joint Genome Institute"/>
            <person name="Copeland A."/>
            <person name="Lucas S."/>
            <person name="Lapidus A."/>
            <person name="Barry K."/>
            <person name="Detter J.C."/>
            <person name="Glavina del Rio T."/>
            <person name="Hammon N."/>
            <person name="Israni S."/>
            <person name="Dalin E."/>
            <person name="Tice H."/>
            <person name="Pitluck S."/>
            <person name="Chertkov O."/>
            <person name="Brettin T."/>
            <person name="Bruce D."/>
            <person name="Han C."/>
            <person name="Schmutz J."/>
            <person name="Larimer F."/>
            <person name="Land M."/>
            <person name="Hauser L."/>
            <person name="Kyrpides N."/>
            <person name="Mikhailova N."/>
            <person name="Shelobolina E."/>
            <person name="Aklujkar M."/>
            <person name="Lovley D."/>
            <person name="Richardson P."/>
        </authorList>
    </citation>
    <scope>NUCLEOTIDE SEQUENCE [LARGE SCALE GENOMIC DNA]</scope>
    <source>
        <strain>ATCC BAA-1134 / JCM 13001 / Rf4</strain>
    </source>
</reference>
<sequence>MKELLRDLITKELASCFADGSLSSGVFPSIVIEKPAHAEHGDFATNVAMLLAKAEKKAPRVVAEILVSRLQESADICSKLEVAGPGFINFYVKDEAWRQTLIAIDRACADYGKSRIGEGKKIQVEFVSANPTGPLHIGHGRGAAIGDTICRLLAAIGWDVTREFYYNDAGQQIANLALSVQARCLGIEPDDPRWPLDGYQGDYIRDVARSYLGQETVEADDQHVTAAGDPQDLDAIRRFAVAYLRREQDQDLTAFDVHFDVYSLESALYAEGRVEAVVQRLIDSGHTYEQDGALWLRTTTFGDDKDRVMRKADGGYTYFVPDVAYHLSKWERGFTRVINEQGADHHSTITRVRAGLQALNAGIPVGWPEYVLHQMVTVMRGGEEVKISKRAGSYVTLRDLIDEVGRDATRFFFVMRKPDSQLVFDIDLAKQQTLDNPVYYVQYAHARICSIFENALERGFVLPAAESVPLERLVTLEEMTIIKTLASFPEILEGSALNFEPHRVTYYLQELAGQFHSFYNRNRVITEDAELTAARLFLLKCVALTLKNALTVLGISAPEKM</sequence>
<comment type="catalytic activity">
    <reaction evidence="1">
        <text>tRNA(Arg) + L-arginine + ATP = L-arginyl-tRNA(Arg) + AMP + diphosphate</text>
        <dbReference type="Rhea" id="RHEA:20301"/>
        <dbReference type="Rhea" id="RHEA-COMP:9658"/>
        <dbReference type="Rhea" id="RHEA-COMP:9673"/>
        <dbReference type="ChEBI" id="CHEBI:30616"/>
        <dbReference type="ChEBI" id="CHEBI:32682"/>
        <dbReference type="ChEBI" id="CHEBI:33019"/>
        <dbReference type="ChEBI" id="CHEBI:78442"/>
        <dbReference type="ChEBI" id="CHEBI:78513"/>
        <dbReference type="ChEBI" id="CHEBI:456215"/>
        <dbReference type="EC" id="6.1.1.19"/>
    </reaction>
</comment>
<comment type="subunit">
    <text evidence="1">Monomer.</text>
</comment>
<comment type="subcellular location">
    <subcellularLocation>
        <location evidence="1">Cytoplasm</location>
    </subcellularLocation>
</comment>
<comment type="similarity">
    <text evidence="1">Belongs to the class-I aminoacyl-tRNA synthetase family.</text>
</comment>
<gene>
    <name evidence="1" type="primary">argS</name>
    <name type="ordered locus">Gura_2304</name>
</gene>
<organism>
    <name type="scientific">Geotalea uraniireducens (strain Rf4)</name>
    <name type="common">Geobacter uraniireducens</name>
    <dbReference type="NCBI Taxonomy" id="351605"/>
    <lineage>
        <taxon>Bacteria</taxon>
        <taxon>Pseudomonadati</taxon>
        <taxon>Thermodesulfobacteriota</taxon>
        <taxon>Desulfuromonadia</taxon>
        <taxon>Geobacterales</taxon>
        <taxon>Geobacteraceae</taxon>
        <taxon>Geotalea</taxon>
    </lineage>
</organism>
<keyword id="KW-0030">Aminoacyl-tRNA synthetase</keyword>
<keyword id="KW-0067">ATP-binding</keyword>
<keyword id="KW-0963">Cytoplasm</keyword>
<keyword id="KW-0436">Ligase</keyword>
<keyword id="KW-0547">Nucleotide-binding</keyword>
<keyword id="KW-0648">Protein biosynthesis</keyword>
<keyword id="KW-1185">Reference proteome</keyword>
<dbReference type="EC" id="6.1.1.19" evidence="1"/>
<dbReference type="EMBL" id="CP000698">
    <property type="protein sequence ID" value="ABQ26483.1"/>
    <property type="molecule type" value="Genomic_DNA"/>
</dbReference>
<dbReference type="RefSeq" id="WP_011939177.1">
    <property type="nucleotide sequence ID" value="NC_009483.1"/>
</dbReference>
<dbReference type="SMR" id="A5G3W5"/>
<dbReference type="STRING" id="351605.Gura_2304"/>
<dbReference type="KEGG" id="gur:Gura_2304"/>
<dbReference type="HOGENOM" id="CLU_006406_0_1_7"/>
<dbReference type="OrthoDB" id="9803211at2"/>
<dbReference type="Proteomes" id="UP000006695">
    <property type="component" value="Chromosome"/>
</dbReference>
<dbReference type="GO" id="GO:0005737">
    <property type="term" value="C:cytoplasm"/>
    <property type="evidence" value="ECO:0007669"/>
    <property type="project" value="UniProtKB-SubCell"/>
</dbReference>
<dbReference type="GO" id="GO:0004814">
    <property type="term" value="F:arginine-tRNA ligase activity"/>
    <property type="evidence" value="ECO:0007669"/>
    <property type="project" value="UniProtKB-UniRule"/>
</dbReference>
<dbReference type="GO" id="GO:0005524">
    <property type="term" value="F:ATP binding"/>
    <property type="evidence" value="ECO:0007669"/>
    <property type="project" value="UniProtKB-UniRule"/>
</dbReference>
<dbReference type="GO" id="GO:0006420">
    <property type="term" value="P:arginyl-tRNA aminoacylation"/>
    <property type="evidence" value="ECO:0007669"/>
    <property type="project" value="UniProtKB-UniRule"/>
</dbReference>
<dbReference type="CDD" id="cd00671">
    <property type="entry name" value="ArgRS_core"/>
    <property type="match status" value="1"/>
</dbReference>
<dbReference type="FunFam" id="1.10.730.10:FF:000008">
    <property type="entry name" value="Arginine--tRNA ligase"/>
    <property type="match status" value="1"/>
</dbReference>
<dbReference type="FunFam" id="3.30.1360.70:FF:000003">
    <property type="entry name" value="Arginine--tRNA ligase"/>
    <property type="match status" value="1"/>
</dbReference>
<dbReference type="FunFam" id="3.40.50.620:FF:000062">
    <property type="entry name" value="Arginine--tRNA ligase"/>
    <property type="match status" value="1"/>
</dbReference>
<dbReference type="Gene3D" id="3.30.1360.70">
    <property type="entry name" value="Arginyl tRNA synthetase N-terminal domain"/>
    <property type="match status" value="1"/>
</dbReference>
<dbReference type="Gene3D" id="3.40.50.620">
    <property type="entry name" value="HUPs"/>
    <property type="match status" value="1"/>
</dbReference>
<dbReference type="Gene3D" id="1.10.730.10">
    <property type="entry name" value="Isoleucyl-tRNA Synthetase, Domain 1"/>
    <property type="match status" value="1"/>
</dbReference>
<dbReference type="HAMAP" id="MF_00123">
    <property type="entry name" value="Arg_tRNA_synth"/>
    <property type="match status" value="1"/>
</dbReference>
<dbReference type="InterPro" id="IPR001412">
    <property type="entry name" value="aa-tRNA-synth_I_CS"/>
</dbReference>
<dbReference type="InterPro" id="IPR001278">
    <property type="entry name" value="Arg-tRNA-ligase"/>
</dbReference>
<dbReference type="InterPro" id="IPR005148">
    <property type="entry name" value="Arg-tRNA-synth_N"/>
</dbReference>
<dbReference type="InterPro" id="IPR036695">
    <property type="entry name" value="Arg-tRNA-synth_N_sf"/>
</dbReference>
<dbReference type="InterPro" id="IPR035684">
    <property type="entry name" value="ArgRS_core"/>
</dbReference>
<dbReference type="InterPro" id="IPR008909">
    <property type="entry name" value="DALR_anticod-bd"/>
</dbReference>
<dbReference type="InterPro" id="IPR014729">
    <property type="entry name" value="Rossmann-like_a/b/a_fold"/>
</dbReference>
<dbReference type="InterPro" id="IPR009080">
    <property type="entry name" value="tRNAsynth_Ia_anticodon-bd"/>
</dbReference>
<dbReference type="NCBIfam" id="TIGR00456">
    <property type="entry name" value="argS"/>
    <property type="match status" value="1"/>
</dbReference>
<dbReference type="PANTHER" id="PTHR11956:SF5">
    <property type="entry name" value="ARGININE--TRNA LIGASE, CYTOPLASMIC"/>
    <property type="match status" value="1"/>
</dbReference>
<dbReference type="PANTHER" id="PTHR11956">
    <property type="entry name" value="ARGINYL-TRNA SYNTHETASE"/>
    <property type="match status" value="1"/>
</dbReference>
<dbReference type="Pfam" id="PF03485">
    <property type="entry name" value="Arg_tRNA_synt_N"/>
    <property type="match status" value="1"/>
</dbReference>
<dbReference type="Pfam" id="PF05746">
    <property type="entry name" value="DALR_1"/>
    <property type="match status" value="1"/>
</dbReference>
<dbReference type="Pfam" id="PF00750">
    <property type="entry name" value="tRNA-synt_1d"/>
    <property type="match status" value="1"/>
</dbReference>
<dbReference type="PRINTS" id="PR01038">
    <property type="entry name" value="TRNASYNTHARG"/>
</dbReference>
<dbReference type="SMART" id="SM01016">
    <property type="entry name" value="Arg_tRNA_synt_N"/>
    <property type="match status" value="1"/>
</dbReference>
<dbReference type="SMART" id="SM00836">
    <property type="entry name" value="DALR_1"/>
    <property type="match status" value="1"/>
</dbReference>
<dbReference type="SUPFAM" id="SSF47323">
    <property type="entry name" value="Anticodon-binding domain of a subclass of class I aminoacyl-tRNA synthetases"/>
    <property type="match status" value="1"/>
</dbReference>
<dbReference type="SUPFAM" id="SSF55190">
    <property type="entry name" value="Arginyl-tRNA synthetase (ArgRS), N-terminal 'additional' domain"/>
    <property type="match status" value="1"/>
</dbReference>
<dbReference type="SUPFAM" id="SSF52374">
    <property type="entry name" value="Nucleotidylyl transferase"/>
    <property type="match status" value="1"/>
</dbReference>
<dbReference type="PROSITE" id="PS00178">
    <property type="entry name" value="AA_TRNA_LIGASE_I"/>
    <property type="match status" value="1"/>
</dbReference>
<feature type="chain" id="PRO_1000076216" description="Arginine--tRNA ligase">
    <location>
        <begin position="1"/>
        <end position="561"/>
    </location>
</feature>
<feature type="short sequence motif" description="'HIGH' region">
    <location>
        <begin position="129"/>
        <end position="139"/>
    </location>
</feature>
<accession>A5G3W5</accession>
<evidence type="ECO:0000255" key="1">
    <source>
        <dbReference type="HAMAP-Rule" id="MF_00123"/>
    </source>
</evidence>
<protein>
    <recommendedName>
        <fullName evidence="1">Arginine--tRNA ligase</fullName>
        <ecNumber evidence="1">6.1.1.19</ecNumber>
    </recommendedName>
    <alternativeName>
        <fullName evidence="1">Arginyl-tRNA synthetase</fullName>
        <shortName evidence="1">ArgRS</shortName>
    </alternativeName>
</protein>